<feature type="chain" id="PRO_0000055609" description="Peroxidase">
    <location>
        <begin position="1" status="less than"/>
        <end position="80" status="greater than"/>
    </location>
</feature>
<feature type="region of interest" description="Disordered" evidence="3">
    <location>
        <begin position="56"/>
        <end position="80"/>
    </location>
</feature>
<feature type="binding site" evidence="2">
    <location>
        <position position="67"/>
    </location>
    <ligand>
        <name>substrate</name>
    </ligand>
</feature>
<feature type="glycosylation site" description="N-linked (GlcNAc...) asparagine" evidence="1">
    <location>
        <position position="70"/>
    </location>
</feature>
<feature type="non-terminal residue">
    <location>
        <position position="1"/>
    </location>
</feature>
<feature type="non-terminal residue">
    <location>
        <position position="80"/>
    </location>
</feature>
<comment type="function">
    <text>Removal of H(2)O(2), oxidation of toxic reductants, biosynthesis and degradation of lignin, suberization, auxin catabolism, response to environmental stresses such as wounding, pathogen attack and oxidative stress. These functions might be dependent on each isozyme/isoform in each plant tissue.</text>
</comment>
<comment type="catalytic activity">
    <reaction>
        <text>2 a phenolic donor + H2O2 = 2 a phenolic radical donor + 2 H2O</text>
        <dbReference type="Rhea" id="RHEA:56136"/>
        <dbReference type="ChEBI" id="CHEBI:15377"/>
        <dbReference type="ChEBI" id="CHEBI:16240"/>
        <dbReference type="ChEBI" id="CHEBI:139520"/>
        <dbReference type="ChEBI" id="CHEBI:139521"/>
        <dbReference type="EC" id="1.11.1.7"/>
    </reaction>
</comment>
<comment type="cofactor">
    <cofactor>
        <name>Ca(2+)</name>
        <dbReference type="ChEBI" id="CHEBI:29108"/>
    </cofactor>
    <text>Binds 2 calcium ions per subunit.</text>
</comment>
<comment type="cofactor">
    <cofactor>
        <name>heme b</name>
        <dbReference type="ChEBI" id="CHEBI:60344"/>
    </cofactor>
    <text>Binds 1 heme b (iron(II)-protoporphyrin IX) group per subunit.</text>
</comment>
<comment type="similarity">
    <text evidence="2">Belongs to the peroxidase family. Classical plant (class III) peroxidase subfamily.</text>
</comment>
<sequence length="80" mass="8366">ALRGFGVIDSIKTQIEAICNQTVSCADILTVAARDSVVALGGPSWTVPLGRRDSIDANEAEANSDLPGFNSSRSELEAAF</sequence>
<organism>
    <name type="scientific">Triticum aestivum</name>
    <name type="common">Wheat</name>
    <dbReference type="NCBI Taxonomy" id="4565"/>
    <lineage>
        <taxon>Eukaryota</taxon>
        <taxon>Viridiplantae</taxon>
        <taxon>Streptophyta</taxon>
        <taxon>Embryophyta</taxon>
        <taxon>Tracheophyta</taxon>
        <taxon>Spermatophyta</taxon>
        <taxon>Magnoliopsida</taxon>
        <taxon>Liliopsida</taxon>
        <taxon>Poales</taxon>
        <taxon>Poaceae</taxon>
        <taxon>BOP clade</taxon>
        <taxon>Pooideae</taxon>
        <taxon>Triticodae</taxon>
        <taxon>Triticeae</taxon>
        <taxon>Triticinae</taxon>
        <taxon>Triticum</taxon>
    </lineage>
</organism>
<dbReference type="EC" id="1.11.1.7"/>
<dbReference type="EMBL" id="X16081">
    <property type="protein sequence ID" value="CAA34211.1"/>
    <property type="molecule type" value="mRNA"/>
</dbReference>
<dbReference type="PIR" id="S04862">
    <property type="entry name" value="S04862"/>
</dbReference>
<dbReference type="SMR" id="P15984"/>
<dbReference type="STRING" id="4565.P15984"/>
<dbReference type="Allergome" id="985">
    <property type="allergen name" value="Tri a Bd36K"/>
</dbReference>
<dbReference type="PeroxiBase" id="3568">
    <property type="entry name" value="TaPrx15-1A"/>
</dbReference>
<dbReference type="PaxDb" id="4565-Traes_2BS_B6EBC0962.1"/>
<dbReference type="eggNOG" id="ENOG502QU1K">
    <property type="taxonomic scope" value="Eukaryota"/>
</dbReference>
<dbReference type="Proteomes" id="UP000019116">
    <property type="component" value="Unplaced"/>
</dbReference>
<dbReference type="ExpressionAtlas" id="P15984">
    <property type="expression patterns" value="differential"/>
</dbReference>
<dbReference type="GO" id="GO:0020037">
    <property type="term" value="F:heme binding"/>
    <property type="evidence" value="ECO:0007669"/>
    <property type="project" value="InterPro"/>
</dbReference>
<dbReference type="GO" id="GO:0140825">
    <property type="term" value="F:lactoperoxidase activity"/>
    <property type="evidence" value="ECO:0007669"/>
    <property type="project" value="UniProtKB-EC"/>
</dbReference>
<dbReference type="GO" id="GO:0046872">
    <property type="term" value="F:metal ion binding"/>
    <property type="evidence" value="ECO:0007669"/>
    <property type="project" value="UniProtKB-KW"/>
</dbReference>
<dbReference type="GO" id="GO:0042744">
    <property type="term" value="P:hydrogen peroxide catabolic process"/>
    <property type="evidence" value="ECO:0007669"/>
    <property type="project" value="UniProtKB-KW"/>
</dbReference>
<dbReference type="GO" id="GO:0006979">
    <property type="term" value="P:response to oxidative stress"/>
    <property type="evidence" value="ECO:0007669"/>
    <property type="project" value="InterPro"/>
</dbReference>
<dbReference type="Gene3D" id="1.10.520.10">
    <property type="match status" value="1"/>
</dbReference>
<dbReference type="Gene3D" id="1.10.420.10">
    <property type="entry name" value="Peroxidase, domain 2"/>
    <property type="match status" value="1"/>
</dbReference>
<dbReference type="InterPro" id="IPR002016">
    <property type="entry name" value="Haem_peroxidase"/>
</dbReference>
<dbReference type="InterPro" id="IPR010255">
    <property type="entry name" value="Haem_peroxidase_sf"/>
</dbReference>
<dbReference type="InterPro" id="IPR000823">
    <property type="entry name" value="Peroxidase_pln"/>
</dbReference>
<dbReference type="PANTHER" id="PTHR31388:SF280">
    <property type="entry name" value="PEROXIDASE"/>
    <property type="match status" value="1"/>
</dbReference>
<dbReference type="PANTHER" id="PTHR31388">
    <property type="entry name" value="PEROXIDASE 72-RELATED"/>
    <property type="match status" value="1"/>
</dbReference>
<dbReference type="Pfam" id="PF00141">
    <property type="entry name" value="peroxidase"/>
    <property type="match status" value="1"/>
</dbReference>
<dbReference type="PRINTS" id="PR00458">
    <property type="entry name" value="PEROXIDASE"/>
</dbReference>
<dbReference type="PRINTS" id="PR00461">
    <property type="entry name" value="PLPEROXIDASE"/>
</dbReference>
<dbReference type="SUPFAM" id="SSF48113">
    <property type="entry name" value="Heme-dependent peroxidases"/>
    <property type="match status" value="1"/>
</dbReference>
<dbReference type="PROSITE" id="PS50873">
    <property type="entry name" value="PEROXIDASE_4"/>
    <property type="match status" value="1"/>
</dbReference>
<keyword id="KW-0106">Calcium</keyword>
<keyword id="KW-0325">Glycoprotein</keyword>
<keyword id="KW-0349">Heme</keyword>
<keyword id="KW-0376">Hydrogen peroxide</keyword>
<keyword id="KW-0408">Iron</keyword>
<keyword id="KW-0479">Metal-binding</keyword>
<keyword id="KW-0560">Oxidoreductase</keyword>
<keyword id="KW-0575">Peroxidase</keyword>
<keyword id="KW-1185">Reference proteome</keyword>
<proteinExistence type="evidence at transcript level"/>
<reference key="1">
    <citation type="journal article" date="1989" name="Plant Mol. Biol.">
        <title>cDNA cloning, in vitro transcription and partial sequence analysis of mRNAs from winter wheat (Triticum aestivum L.) with induced resistance to Erysiphe graminis f. sp. tritici.</title>
        <authorList>
            <person name="Schweizer P."/>
            <person name="Hunziker W."/>
            <person name="Moesinger E."/>
        </authorList>
    </citation>
    <scope>NUCLEOTIDE SEQUENCE [MRNA]</scope>
    <source>
        <strain>cv. Fidel</strain>
        <tissue>Leaf</tissue>
    </source>
</reference>
<accession>P15984</accession>
<protein>
    <recommendedName>
        <fullName>Peroxidase</fullName>
        <ecNumber>1.11.1.7</ecNumber>
    </recommendedName>
</protein>
<name>PERX_WHEAT</name>
<evidence type="ECO:0000255" key="1"/>
<evidence type="ECO:0000255" key="2">
    <source>
        <dbReference type="PROSITE-ProRule" id="PRU00297"/>
    </source>
</evidence>
<evidence type="ECO:0000256" key="3">
    <source>
        <dbReference type="SAM" id="MobiDB-lite"/>
    </source>
</evidence>